<sequence>MIDSEGFRPNVGIILANDDGQVLWAKRIGHNAWQFPQGGIQFGETPEQALFRELREEIGLLPEHVQIIAQTKGWLRYRLPHRYIRSDSDPVCIGQKQKWFLLKLTAPAKNIQLNLADPPEFDEWQWVSYWYPLGQVVNFKRDVYRKAMVELCTQLPVQQLP</sequence>
<keyword id="KW-0378">Hydrolase</keyword>
<name>RPPH_ACIBY</name>
<comment type="function">
    <text evidence="1">Accelerates the degradation of transcripts by removing pyrophosphate from the 5'-end of triphosphorylated RNA, leading to a more labile monophosphorylated state that can stimulate subsequent ribonuclease cleavage.</text>
</comment>
<comment type="cofactor">
    <cofactor evidence="1">
        <name>a divalent metal cation</name>
        <dbReference type="ChEBI" id="CHEBI:60240"/>
    </cofactor>
</comment>
<comment type="similarity">
    <text evidence="1">Belongs to the Nudix hydrolase family. RppH subfamily.</text>
</comment>
<gene>
    <name evidence="1" type="primary">rppH</name>
    <name evidence="1" type="synonym">nudH</name>
    <name type="ordered locus">ABAYE3364</name>
</gene>
<proteinExistence type="inferred from homology"/>
<feature type="chain" id="PRO_1000115261" description="RNA pyrophosphohydrolase">
    <location>
        <begin position="1"/>
        <end position="161"/>
    </location>
</feature>
<feature type="domain" description="Nudix hydrolase" evidence="1">
    <location>
        <begin position="6"/>
        <end position="149"/>
    </location>
</feature>
<feature type="short sequence motif" description="Nudix box">
    <location>
        <begin position="38"/>
        <end position="59"/>
    </location>
</feature>
<dbReference type="EC" id="3.6.1.-" evidence="1"/>
<dbReference type="EMBL" id="CU459141">
    <property type="protein sequence ID" value="CAM88160.1"/>
    <property type="molecule type" value="Genomic_DNA"/>
</dbReference>
<dbReference type="RefSeq" id="WP_000567254.1">
    <property type="nucleotide sequence ID" value="NZ_JBDGFB010000003.1"/>
</dbReference>
<dbReference type="SMR" id="B0VEE3"/>
<dbReference type="EnsemblBacteria" id="CAM88160">
    <property type="protein sequence ID" value="CAM88160"/>
    <property type="gene ID" value="ABAYE3364"/>
</dbReference>
<dbReference type="KEGG" id="aby:ABAYE3364"/>
<dbReference type="HOGENOM" id="CLU_087195_3_1_6"/>
<dbReference type="GO" id="GO:0016462">
    <property type="term" value="F:pyrophosphatase activity"/>
    <property type="evidence" value="ECO:0007669"/>
    <property type="project" value="UniProtKB-ARBA"/>
</dbReference>
<dbReference type="CDD" id="cd03671">
    <property type="entry name" value="NUDIX_Ap4A_hydrolase_plant_like"/>
    <property type="match status" value="1"/>
</dbReference>
<dbReference type="FunFam" id="3.90.79.10:FF:000001">
    <property type="entry name" value="RNA pyrophosphohydrolase"/>
    <property type="match status" value="1"/>
</dbReference>
<dbReference type="Gene3D" id="3.90.79.10">
    <property type="entry name" value="Nucleoside Triphosphate Pyrophosphohydrolase"/>
    <property type="match status" value="1"/>
</dbReference>
<dbReference type="HAMAP" id="MF_00298">
    <property type="entry name" value="Nudix_RppH"/>
    <property type="match status" value="1"/>
</dbReference>
<dbReference type="InterPro" id="IPR020476">
    <property type="entry name" value="Nudix_hydrolase"/>
</dbReference>
<dbReference type="InterPro" id="IPR015797">
    <property type="entry name" value="NUDIX_hydrolase-like_dom_sf"/>
</dbReference>
<dbReference type="InterPro" id="IPR020084">
    <property type="entry name" value="NUDIX_hydrolase_CS"/>
</dbReference>
<dbReference type="InterPro" id="IPR000086">
    <property type="entry name" value="NUDIX_hydrolase_dom"/>
</dbReference>
<dbReference type="InterPro" id="IPR022927">
    <property type="entry name" value="RppH"/>
</dbReference>
<dbReference type="NCBIfam" id="NF001934">
    <property type="entry name" value="PRK00714.1-1"/>
    <property type="match status" value="1"/>
</dbReference>
<dbReference type="NCBIfam" id="NF001937">
    <property type="entry name" value="PRK00714.1-4"/>
    <property type="match status" value="1"/>
</dbReference>
<dbReference type="NCBIfam" id="NF001938">
    <property type="entry name" value="PRK00714.1-5"/>
    <property type="match status" value="1"/>
</dbReference>
<dbReference type="PANTHER" id="PTHR43736">
    <property type="entry name" value="ADP-RIBOSE PYROPHOSPHATASE"/>
    <property type="match status" value="1"/>
</dbReference>
<dbReference type="PANTHER" id="PTHR43736:SF1">
    <property type="entry name" value="DIHYDRONEOPTERIN TRIPHOSPHATE DIPHOSPHATASE"/>
    <property type="match status" value="1"/>
</dbReference>
<dbReference type="Pfam" id="PF00293">
    <property type="entry name" value="NUDIX"/>
    <property type="match status" value="1"/>
</dbReference>
<dbReference type="PRINTS" id="PR00502">
    <property type="entry name" value="NUDIXFAMILY"/>
</dbReference>
<dbReference type="SUPFAM" id="SSF55811">
    <property type="entry name" value="Nudix"/>
    <property type="match status" value="1"/>
</dbReference>
<dbReference type="PROSITE" id="PS51462">
    <property type="entry name" value="NUDIX"/>
    <property type="match status" value="1"/>
</dbReference>
<dbReference type="PROSITE" id="PS00893">
    <property type="entry name" value="NUDIX_BOX"/>
    <property type="match status" value="1"/>
</dbReference>
<reference key="1">
    <citation type="journal article" date="2008" name="PLoS ONE">
        <title>Comparative analysis of Acinetobacters: three genomes for three lifestyles.</title>
        <authorList>
            <person name="Vallenet D."/>
            <person name="Nordmann P."/>
            <person name="Barbe V."/>
            <person name="Poirel L."/>
            <person name="Mangenot S."/>
            <person name="Bataille E."/>
            <person name="Dossat C."/>
            <person name="Gas S."/>
            <person name="Kreimeyer A."/>
            <person name="Lenoble P."/>
            <person name="Oztas S."/>
            <person name="Poulain J."/>
            <person name="Segurens B."/>
            <person name="Robert C."/>
            <person name="Abergel C."/>
            <person name="Claverie J.-M."/>
            <person name="Raoult D."/>
            <person name="Medigue C."/>
            <person name="Weissenbach J."/>
            <person name="Cruveiller S."/>
        </authorList>
    </citation>
    <scope>NUCLEOTIDE SEQUENCE [LARGE SCALE GENOMIC DNA]</scope>
    <source>
        <strain>AYE</strain>
    </source>
</reference>
<organism>
    <name type="scientific">Acinetobacter baumannii (strain AYE)</name>
    <dbReference type="NCBI Taxonomy" id="509173"/>
    <lineage>
        <taxon>Bacteria</taxon>
        <taxon>Pseudomonadati</taxon>
        <taxon>Pseudomonadota</taxon>
        <taxon>Gammaproteobacteria</taxon>
        <taxon>Moraxellales</taxon>
        <taxon>Moraxellaceae</taxon>
        <taxon>Acinetobacter</taxon>
        <taxon>Acinetobacter calcoaceticus/baumannii complex</taxon>
    </lineage>
</organism>
<accession>B0VEE3</accession>
<evidence type="ECO:0000255" key="1">
    <source>
        <dbReference type="HAMAP-Rule" id="MF_00298"/>
    </source>
</evidence>
<protein>
    <recommendedName>
        <fullName evidence="1">RNA pyrophosphohydrolase</fullName>
        <ecNumber evidence="1">3.6.1.-</ecNumber>
    </recommendedName>
    <alternativeName>
        <fullName evidence="1">(Di)nucleoside polyphosphate hydrolase</fullName>
    </alternativeName>
</protein>